<reference key="1">
    <citation type="journal article" date="2005" name="Proc. Natl. Acad. Sci. U.S.A.">
        <title>Genome analysis of multiple pathogenic isolates of Streptococcus agalactiae: implications for the microbial 'pan-genome'.</title>
        <authorList>
            <person name="Tettelin H."/>
            <person name="Masignani V."/>
            <person name="Cieslewicz M.J."/>
            <person name="Donati C."/>
            <person name="Medini D."/>
            <person name="Ward N.L."/>
            <person name="Angiuoli S.V."/>
            <person name="Crabtree J."/>
            <person name="Jones A.L."/>
            <person name="Durkin A.S."/>
            <person name="DeBoy R.T."/>
            <person name="Davidsen T.M."/>
            <person name="Mora M."/>
            <person name="Scarselli M."/>
            <person name="Margarit y Ros I."/>
            <person name="Peterson J.D."/>
            <person name="Hauser C.R."/>
            <person name="Sundaram J.P."/>
            <person name="Nelson W.C."/>
            <person name="Madupu R."/>
            <person name="Brinkac L.M."/>
            <person name="Dodson R.J."/>
            <person name="Rosovitz M.J."/>
            <person name="Sullivan S.A."/>
            <person name="Daugherty S.C."/>
            <person name="Haft D.H."/>
            <person name="Selengut J."/>
            <person name="Gwinn M.L."/>
            <person name="Zhou L."/>
            <person name="Zafar N."/>
            <person name="Khouri H."/>
            <person name="Radune D."/>
            <person name="Dimitrov G."/>
            <person name="Watkins K."/>
            <person name="O'Connor K.J."/>
            <person name="Smith S."/>
            <person name="Utterback T.R."/>
            <person name="White O."/>
            <person name="Rubens C.E."/>
            <person name="Grandi G."/>
            <person name="Madoff L.C."/>
            <person name="Kasper D.L."/>
            <person name="Telford J.L."/>
            <person name="Wessels M.R."/>
            <person name="Rappuoli R."/>
            <person name="Fraser C.M."/>
        </authorList>
    </citation>
    <scope>NUCLEOTIDE SEQUENCE [LARGE SCALE GENOMIC DNA]</scope>
    <source>
        <strain>ATCC 27591 / A909 / CDC SS700</strain>
    </source>
</reference>
<name>CLPX_STRA1</name>
<proteinExistence type="inferred from homology"/>
<organism>
    <name type="scientific">Streptococcus agalactiae serotype Ia (strain ATCC 27591 / A909 / CDC SS700)</name>
    <dbReference type="NCBI Taxonomy" id="205921"/>
    <lineage>
        <taxon>Bacteria</taxon>
        <taxon>Bacillati</taxon>
        <taxon>Bacillota</taxon>
        <taxon>Bacilli</taxon>
        <taxon>Lactobacillales</taxon>
        <taxon>Streptococcaceae</taxon>
        <taxon>Streptococcus</taxon>
    </lineage>
</organism>
<dbReference type="EMBL" id="CP000114">
    <property type="protein sequence ID" value="ABA44606.1"/>
    <property type="molecule type" value="Genomic_DNA"/>
</dbReference>
<dbReference type="RefSeq" id="WP_000918412.1">
    <property type="nucleotide sequence ID" value="NC_007432.1"/>
</dbReference>
<dbReference type="SMR" id="Q3K0K0"/>
<dbReference type="KEGG" id="sak:SAK_1343"/>
<dbReference type="HOGENOM" id="CLU_014218_8_2_9"/>
<dbReference type="GO" id="GO:0009376">
    <property type="term" value="C:HslUV protease complex"/>
    <property type="evidence" value="ECO:0007669"/>
    <property type="project" value="TreeGrafter"/>
</dbReference>
<dbReference type="GO" id="GO:0005524">
    <property type="term" value="F:ATP binding"/>
    <property type="evidence" value="ECO:0007669"/>
    <property type="project" value="UniProtKB-UniRule"/>
</dbReference>
<dbReference type="GO" id="GO:0016887">
    <property type="term" value="F:ATP hydrolysis activity"/>
    <property type="evidence" value="ECO:0007669"/>
    <property type="project" value="InterPro"/>
</dbReference>
<dbReference type="GO" id="GO:0140662">
    <property type="term" value="F:ATP-dependent protein folding chaperone"/>
    <property type="evidence" value="ECO:0007669"/>
    <property type="project" value="InterPro"/>
</dbReference>
<dbReference type="GO" id="GO:0046983">
    <property type="term" value="F:protein dimerization activity"/>
    <property type="evidence" value="ECO:0007669"/>
    <property type="project" value="InterPro"/>
</dbReference>
<dbReference type="GO" id="GO:0051082">
    <property type="term" value="F:unfolded protein binding"/>
    <property type="evidence" value="ECO:0007669"/>
    <property type="project" value="UniProtKB-UniRule"/>
</dbReference>
<dbReference type="GO" id="GO:0008270">
    <property type="term" value="F:zinc ion binding"/>
    <property type="evidence" value="ECO:0007669"/>
    <property type="project" value="InterPro"/>
</dbReference>
<dbReference type="GO" id="GO:0051301">
    <property type="term" value="P:cell division"/>
    <property type="evidence" value="ECO:0007669"/>
    <property type="project" value="TreeGrafter"/>
</dbReference>
<dbReference type="GO" id="GO:0051603">
    <property type="term" value="P:proteolysis involved in protein catabolic process"/>
    <property type="evidence" value="ECO:0007669"/>
    <property type="project" value="TreeGrafter"/>
</dbReference>
<dbReference type="CDD" id="cd19497">
    <property type="entry name" value="RecA-like_ClpX"/>
    <property type="match status" value="1"/>
</dbReference>
<dbReference type="FunFam" id="1.10.8.60:FF:000002">
    <property type="entry name" value="ATP-dependent Clp protease ATP-binding subunit ClpX"/>
    <property type="match status" value="1"/>
</dbReference>
<dbReference type="FunFam" id="3.40.50.300:FF:000005">
    <property type="entry name" value="ATP-dependent Clp protease ATP-binding subunit ClpX"/>
    <property type="match status" value="1"/>
</dbReference>
<dbReference type="Gene3D" id="1.10.8.60">
    <property type="match status" value="1"/>
</dbReference>
<dbReference type="Gene3D" id="6.20.220.10">
    <property type="entry name" value="ClpX chaperone, C4-type zinc finger domain"/>
    <property type="match status" value="1"/>
</dbReference>
<dbReference type="Gene3D" id="3.40.50.300">
    <property type="entry name" value="P-loop containing nucleotide triphosphate hydrolases"/>
    <property type="match status" value="1"/>
</dbReference>
<dbReference type="HAMAP" id="MF_00175">
    <property type="entry name" value="ClpX"/>
    <property type="match status" value="1"/>
</dbReference>
<dbReference type="InterPro" id="IPR003593">
    <property type="entry name" value="AAA+_ATPase"/>
</dbReference>
<dbReference type="InterPro" id="IPR050052">
    <property type="entry name" value="ATP-dep_Clp_protease_ClpX"/>
</dbReference>
<dbReference type="InterPro" id="IPR003959">
    <property type="entry name" value="ATPase_AAA_core"/>
</dbReference>
<dbReference type="InterPro" id="IPR019489">
    <property type="entry name" value="Clp_ATPase_C"/>
</dbReference>
<dbReference type="InterPro" id="IPR004487">
    <property type="entry name" value="Clp_protease_ATP-bd_su_ClpX"/>
</dbReference>
<dbReference type="InterPro" id="IPR046425">
    <property type="entry name" value="ClpX_bact"/>
</dbReference>
<dbReference type="InterPro" id="IPR027417">
    <property type="entry name" value="P-loop_NTPase"/>
</dbReference>
<dbReference type="InterPro" id="IPR010603">
    <property type="entry name" value="Znf_CppX_C4"/>
</dbReference>
<dbReference type="InterPro" id="IPR038366">
    <property type="entry name" value="Znf_CppX_C4_sf"/>
</dbReference>
<dbReference type="NCBIfam" id="TIGR00382">
    <property type="entry name" value="clpX"/>
    <property type="match status" value="1"/>
</dbReference>
<dbReference type="NCBIfam" id="NF003745">
    <property type="entry name" value="PRK05342.1"/>
    <property type="match status" value="1"/>
</dbReference>
<dbReference type="PANTHER" id="PTHR48102:SF7">
    <property type="entry name" value="ATP-DEPENDENT CLP PROTEASE ATP-BINDING SUBUNIT CLPX-LIKE, MITOCHONDRIAL"/>
    <property type="match status" value="1"/>
</dbReference>
<dbReference type="PANTHER" id="PTHR48102">
    <property type="entry name" value="ATP-DEPENDENT CLP PROTEASE ATP-BINDING SUBUNIT CLPX-LIKE, MITOCHONDRIAL-RELATED"/>
    <property type="match status" value="1"/>
</dbReference>
<dbReference type="Pfam" id="PF07724">
    <property type="entry name" value="AAA_2"/>
    <property type="match status" value="1"/>
</dbReference>
<dbReference type="Pfam" id="PF10431">
    <property type="entry name" value="ClpB_D2-small"/>
    <property type="match status" value="1"/>
</dbReference>
<dbReference type="Pfam" id="PF06689">
    <property type="entry name" value="zf-C4_ClpX"/>
    <property type="match status" value="1"/>
</dbReference>
<dbReference type="SMART" id="SM00382">
    <property type="entry name" value="AAA"/>
    <property type="match status" value="1"/>
</dbReference>
<dbReference type="SMART" id="SM01086">
    <property type="entry name" value="ClpB_D2-small"/>
    <property type="match status" value="1"/>
</dbReference>
<dbReference type="SMART" id="SM00994">
    <property type="entry name" value="zf-C4_ClpX"/>
    <property type="match status" value="1"/>
</dbReference>
<dbReference type="SUPFAM" id="SSF57716">
    <property type="entry name" value="Glucocorticoid receptor-like (DNA-binding domain)"/>
    <property type="match status" value="1"/>
</dbReference>
<dbReference type="SUPFAM" id="SSF52540">
    <property type="entry name" value="P-loop containing nucleoside triphosphate hydrolases"/>
    <property type="match status" value="1"/>
</dbReference>
<dbReference type="PROSITE" id="PS51902">
    <property type="entry name" value="CLPX_ZB"/>
    <property type="match status" value="1"/>
</dbReference>
<gene>
    <name evidence="1" type="primary">clpX</name>
    <name type="ordered locus">SAK_1343</name>
</gene>
<feature type="chain" id="PRO_1000024676" description="ATP-dependent Clp protease ATP-binding subunit ClpX">
    <location>
        <begin position="1"/>
        <end position="408"/>
    </location>
</feature>
<feature type="domain" description="ClpX-type ZB" evidence="2">
    <location>
        <begin position="1"/>
        <end position="54"/>
    </location>
</feature>
<feature type="binding site" evidence="2">
    <location>
        <position position="13"/>
    </location>
    <ligand>
        <name>Zn(2+)</name>
        <dbReference type="ChEBI" id="CHEBI:29105"/>
    </ligand>
</feature>
<feature type="binding site" evidence="2">
    <location>
        <position position="16"/>
    </location>
    <ligand>
        <name>Zn(2+)</name>
        <dbReference type="ChEBI" id="CHEBI:29105"/>
    </ligand>
</feature>
<feature type="binding site" evidence="2">
    <location>
        <position position="35"/>
    </location>
    <ligand>
        <name>Zn(2+)</name>
        <dbReference type="ChEBI" id="CHEBI:29105"/>
    </ligand>
</feature>
<feature type="binding site" evidence="2">
    <location>
        <position position="38"/>
    </location>
    <ligand>
        <name>Zn(2+)</name>
        <dbReference type="ChEBI" id="CHEBI:29105"/>
    </ligand>
</feature>
<feature type="binding site" evidence="1">
    <location>
        <begin position="118"/>
        <end position="125"/>
    </location>
    <ligand>
        <name>ATP</name>
        <dbReference type="ChEBI" id="CHEBI:30616"/>
    </ligand>
</feature>
<accession>Q3K0K0</accession>
<comment type="function">
    <text evidence="1">ATP-dependent specificity component of the Clp protease. It directs the protease to specific substrates. Can perform chaperone functions in the absence of ClpP.</text>
</comment>
<comment type="subunit">
    <text evidence="1">Component of the ClpX-ClpP complex. Forms a hexameric ring that, in the presence of ATP, binds to fourteen ClpP subunits assembled into a disk-like structure with a central cavity, resembling the structure of eukaryotic proteasomes.</text>
</comment>
<comment type="similarity">
    <text evidence="1">Belongs to the ClpX chaperone family.</text>
</comment>
<evidence type="ECO:0000255" key="1">
    <source>
        <dbReference type="HAMAP-Rule" id="MF_00175"/>
    </source>
</evidence>
<evidence type="ECO:0000255" key="2">
    <source>
        <dbReference type="PROSITE-ProRule" id="PRU01250"/>
    </source>
</evidence>
<keyword id="KW-0067">ATP-binding</keyword>
<keyword id="KW-0143">Chaperone</keyword>
<keyword id="KW-0479">Metal-binding</keyword>
<keyword id="KW-0547">Nucleotide-binding</keyword>
<keyword id="KW-0862">Zinc</keyword>
<protein>
    <recommendedName>
        <fullName evidence="1">ATP-dependent Clp protease ATP-binding subunit ClpX</fullName>
    </recommendedName>
</protein>
<sequence length="408" mass="44850">MAGNRNNDMNVYCSFCGKSQDEVKKIIAGNGVFICNECVALSQEIIKEELAEEVLADLAEVPKPKELLEILNQYVVGQDRAKRALAVAVYNHYKRVSYTESSDDDVDLQKSNILMIGPTGSGKTFLAQTLAKSLNVPFAIADATSLTEAGYVGEDVENILLKLIQAADYNVERAERGIIYVDEIDKIAKKGENVSITRDVSGEGVQQALLKIIEGTVASVPPQGGRKHPNQEMIQINTKNILFIVGGAFDGIEDLVKQRLGEKIIGFGQTSRKIDDNASYMQEIISEDIQKFGLIPEFIGRLPVVAALELLTAEDLVRILTEPRNALVKQYQTLLSYDGVELEFDQDALLAIADKAIERKTGARGLRSIIEETMLDIMFEIPSQEDVTKVRITKAAVEGTDKPVLETA</sequence>